<protein>
    <recommendedName>
        <fullName>Histone deacetylase 11</fullName>
        <shortName>HD11</shortName>
        <ecNumber>3.5.1.98</ecNumber>
    </recommendedName>
</protein>
<name>HDA11_MACFA</name>
<accession>Q9GKU5</accession>
<evidence type="ECO:0000250" key="1"/>
<evidence type="ECO:0000305" key="2"/>
<comment type="function">
    <text evidence="1">Responsible for the deacetylation of lysine residues on the N-terminal part of the core histones (H2A, H2B, H3 and H4). Histone deacetylation gives a tag for epigenetic repression and plays an important role in transcriptional regulation, cell cycle progression and developmental events. Histone deacetylases act via the formation of large multiprotein complexes (By similarity).</text>
</comment>
<comment type="catalytic activity">
    <reaction>
        <text>N(6)-acetyl-L-lysyl-[histone] + H2O = L-lysyl-[histone] + acetate</text>
        <dbReference type="Rhea" id="RHEA:58196"/>
        <dbReference type="Rhea" id="RHEA-COMP:9845"/>
        <dbReference type="Rhea" id="RHEA-COMP:11338"/>
        <dbReference type="ChEBI" id="CHEBI:15377"/>
        <dbReference type="ChEBI" id="CHEBI:29969"/>
        <dbReference type="ChEBI" id="CHEBI:30089"/>
        <dbReference type="ChEBI" id="CHEBI:61930"/>
        <dbReference type="EC" id="3.5.1.98"/>
    </reaction>
</comment>
<comment type="subunit">
    <text evidence="1">Interacts with HDAC6.</text>
</comment>
<comment type="subcellular location">
    <subcellularLocation>
        <location evidence="1">Nucleus</location>
    </subcellularLocation>
</comment>
<comment type="miscellaneous">
    <text evidence="1">Its activity is inhibited by trapoxin, a known histone deacetylase inhibitor.</text>
</comment>
<comment type="similarity">
    <text evidence="2">Belongs to the histone deacetylase family.</text>
</comment>
<comment type="sequence caution" evidence="2">
    <conflict type="frameshift">
        <sequence resource="EMBL-CDS" id="BAB18987"/>
    </conflict>
</comment>
<keyword id="KW-0156">Chromatin regulator</keyword>
<keyword id="KW-0378">Hydrolase</keyword>
<keyword id="KW-0539">Nucleus</keyword>
<keyword id="KW-1185">Reference proteome</keyword>
<keyword id="KW-0678">Repressor</keyword>
<keyword id="KW-0804">Transcription</keyword>
<keyword id="KW-0805">Transcription regulation</keyword>
<feature type="chain" id="PRO_0000114716" description="Histone deacetylase 11">
    <location>
        <begin position="1"/>
        <end position="347"/>
    </location>
</feature>
<feature type="region of interest" description="Histone deacetylase">
    <location>
        <begin position="14"/>
        <end position="318"/>
    </location>
</feature>
<feature type="active site" evidence="1">
    <location>
        <position position="143"/>
    </location>
</feature>
<dbReference type="EC" id="3.5.1.98"/>
<dbReference type="EMBL" id="AB052134">
    <property type="protein sequence ID" value="BAB18987.1"/>
    <property type="status" value="ALT_FRAME"/>
    <property type="molecule type" value="mRNA"/>
</dbReference>
<dbReference type="RefSeq" id="NP_001270923.1">
    <property type="nucleotide sequence ID" value="NM_001283994.1"/>
</dbReference>
<dbReference type="RefSeq" id="XP_005547935.1">
    <property type="nucleotide sequence ID" value="XM_005547878.4"/>
</dbReference>
<dbReference type="RefSeq" id="XP_015300840.1">
    <property type="nucleotide sequence ID" value="XM_015445354.1"/>
</dbReference>
<dbReference type="SMR" id="Q9GKU5"/>
<dbReference type="STRING" id="9541.ENSMFAP00000003038"/>
<dbReference type="GeneID" id="102133368"/>
<dbReference type="KEGG" id="mcf:102133368"/>
<dbReference type="CTD" id="79885"/>
<dbReference type="eggNOG" id="KOG1344">
    <property type="taxonomic scope" value="Eukaryota"/>
</dbReference>
<dbReference type="OrthoDB" id="1698at314294"/>
<dbReference type="Proteomes" id="UP000233100">
    <property type="component" value="Unplaced"/>
</dbReference>
<dbReference type="GO" id="GO:0005737">
    <property type="term" value="C:cytoplasm"/>
    <property type="evidence" value="ECO:0000304"/>
    <property type="project" value="UniProtKB"/>
</dbReference>
<dbReference type="GO" id="GO:0000118">
    <property type="term" value="C:histone deacetylase complex"/>
    <property type="evidence" value="ECO:0000304"/>
    <property type="project" value="UniProtKB"/>
</dbReference>
<dbReference type="GO" id="GO:0005634">
    <property type="term" value="C:nucleus"/>
    <property type="evidence" value="ECO:0000304"/>
    <property type="project" value="UniProtKB"/>
</dbReference>
<dbReference type="GO" id="GO:0140297">
    <property type="term" value="F:DNA-binding transcription factor binding"/>
    <property type="evidence" value="ECO:0000304"/>
    <property type="project" value="UniProtKB"/>
</dbReference>
<dbReference type="GO" id="GO:0004407">
    <property type="term" value="F:histone deacetylase activity"/>
    <property type="evidence" value="ECO:0000304"/>
    <property type="project" value="UniProtKB"/>
</dbReference>
<dbReference type="GO" id="GO:0141221">
    <property type="term" value="F:histone deacetylase activity, hydrolytic mechanism"/>
    <property type="evidence" value="ECO:0007669"/>
    <property type="project" value="UniProtKB-EC"/>
</dbReference>
<dbReference type="GO" id="GO:0006325">
    <property type="term" value="P:chromatin organization"/>
    <property type="evidence" value="ECO:0000304"/>
    <property type="project" value="UniProtKB"/>
</dbReference>
<dbReference type="GO" id="GO:0040029">
    <property type="term" value="P:epigenetic regulation of gene expression"/>
    <property type="evidence" value="ECO:0007669"/>
    <property type="project" value="TreeGrafter"/>
</dbReference>
<dbReference type="CDD" id="cd09993">
    <property type="entry name" value="HDAC_classIV"/>
    <property type="match status" value="1"/>
</dbReference>
<dbReference type="FunFam" id="3.40.800.20:FF:000009">
    <property type="entry name" value="Histone deacetylase 11"/>
    <property type="match status" value="1"/>
</dbReference>
<dbReference type="Gene3D" id="3.40.800.20">
    <property type="entry name" value="Histone deacetylase domain"/>
    <property type="match status" value="1"/>
</dbReference>
<dbReference type="InterPro" id="IPR044150">
    <property type="entry name" value="HDAC_classIV"/>
</dbReference>
<dbReference type="InterPro" id="IPR050284">
    <property type="entry name" value="HDAC_PDAC"/>
</dbReference>
<dbReference type="InterPro" id="IPR000286">
    <property type="entry name" value="His_deacetylse"/>
</dbReference>
<dbReference type="InterPro" id="IPR023801">
    <property type="entry name" value="His_deacetylse_dom"/>
</dbReference>
<dbReference type="InterPro" id="IPR037138">
    <property type="entry name" value="His_deacetylse_dom_sf"/>
</dbReference>
<dbReference type="InterPro" id="IPR023696">
    <property type="entry name" value="Ureohydrolase_dom_sf"/>
</dbReference>
<dbReference type="PANTHER" id="PTHR10625:SF23">
    <property type="entry name" value="HISTONE DEACETYLASE 11"/>
    <property type="match status" value="1"/>
</dbReference>
<dbReference type="PANTHER" id="PTHR10625">
    <property type="entry name" value="HISTONE DEACETYLASE HDAC1-RELATED"/>
    <property type="match status" value="1"/>
</dbReference>
<dbReference type="Pfam" id="PF00850">
    <property type="entry name" value="Hist_deacetyl"/>
    <property type="match status" value="1"/>
</dbReference>
<dbReference type="PRINTS" id="PR01270">
    <property type="entry name" value="HDASUPER"/>
</dbReference>
<dbReference type="SUPFAM" id="SSF52768">
    <property type="entry name" value="Arginase/deacetylase"/>
    <property type="match status" value="1"/>
</dbReference>
<reference key="1">
    <citation type="submission" date="2000-12" db="EMBL/GenBank/DDBJ databases">
        <title>Isolation of full-length cDNA clones from macaque brain cDNA libraries.</title>
        <authorList>
            <person name="Osada N."/>
            <person name="Hida M."/>
            <person name="Kusuda J."/>
            <person name="Tanuma R."/>
            <person name="Iseki K."/>
            <person name="Hirai M."/>
            <person name="Terao K."/>
            <person name="Suzuki Y."/>
            <person name="Sugano S."/>
            <person name="Hashimoto K."/>
        </authorList>
    </citation>
    <scope>NUCLEOTIDE SEQUENCE [LARGE SCALE MRNA]</scope>
    <source>
        <tissue>Brain cortex</tissue>
    </source>
</reference>
<proteinExistence type="evidence at transcript level"/>
<organism>
    <name type="scientific">Macaca fascicularis</name>
    <name type="common">Crab-eating macaque</name>
    <name type="synonym">Cynomolgus monkey</name>
    <dbReference type="NCBI Taxonomy" id="9541"/>
    <lineage>
        <taxon>Eukaryota</taxon>
        <taxon>Metazoa</taxon>
        <taxon>Chordata</taxon>
        <taxon>Craniata</taxon>
        <taxon>Vertebrata</taxon>
        <taxon>Euteleostomi</taxon>
        <taxon>Mammalia</taxon>
        <taxon>Eutheria</taxon>
        <taxon>Euarchontoglires</taxon>
        <taxon>Primates</taxon>
        <taxon>Haplorrhini</taxon>
        <taxon>Catarrhini</taxon>
        <taxon>Cercopithecidae</taxon>
        <taxon>Cercopithecinae</taxon>
        <taxon>Macaca</taxon>
    </lineage>
</organism>
<sequence>MLHTTQLYQHVPETRWPIVYSPRYNITFMGLEKLHPFDAGKWGKVINFLKEEKLLSDSMLVEAREASEEDLLVVHTRRYLNELKWSFAVATITEIPPVIFLPNFLVQRKVLRPLRTQTGGTIMAGKLAVERGWAINVGGGFHHCSSDRGGGFCAYADITLAIKFLFERVEGISRATIIDLDAHQGNGHERDFMDDKRVYIMDVYNRHIYPGDRFAKQAIRRKVELEWGTEDDEYLDKVERNIEKSLQEHLPDVVVYNAGTDILEGDRLGGLSISPAGIVKRDELVFRMVRGRHVPILMVTSGGYQKRTARIIADSILNLFGLGLIGPESPSISAQNSDTPLLPPAVP</sequence>
<gene>
    <name type="primary">HDAC11</name>
    <name type="ORF">QccE-18183</name>
</gene>